<name>ZUPT_CHLP8</name>
<keyword id="KW-0997">Cell inner membrane</keyword>
<keyword id="KW-1003">Cell membrane</keyword>
<keyword id="KW-0406">Ion transport</keyword>
<keyword id="KW-0408">Iron</keyword>
<keyword id="KW-0472">Membrane</keyword>
<keyword id="KW-0479">Metal-binding</keyword>
<keyword id="KW-0812">Transmembrane</keyword>
<keyword id="KW-1133">Transmembrane helix</keyword>
<keyword id="KW-0813">Transport</keyword>
<keyword id="KW-0862">Zinc</keyword>
<keyword id="KW-0864">Zinc transport</keyword>
<reference key="1">
    <citation type="submission" date="2008-06" db="EMBL/GenBank/DDBJ databases">
        <title>Complete sequence of Chlorobaculum parvum NCIB 8327.</title>
        <authorList>
            <consortium name="US DOE Joint Genome Institute"/>
            <person name="Lucas S."/>
            <person name="Copeland A."/>
            <person name="Lapidus A."/>
            <person name="Glavina del Rio T."/>
            <person name="Dalin E."/>
            <person name="Tice H."/>
            <person name="Bruce D."/>
            <person name="Goodwin L."/>
            <person name="Pitluck S."/>
            <person name="Schmutz J."/>
            <person name="Larimer F."/>
            <person name="Land M."/>
            <person name="Hauser L."/>
            <person name="Kyrpides N."/>
            <person name="Mikhailova N."/>
            <person name="Zhao F."/>
            <person name="Li T."/>
            <person name="Liu Z."/>
            <person name="Overmann J."/>
            <person name="Bryant D.A."/>
            <person name="Richardson P."/>
        </authorList>
    </citation>
    <scope>NUCLEOTIDE SEQUENCE [LARGE SCALE GENOMIC DNA]</scope>
    <source>
        <strain>DSM 263 / NCIMB 8327</strain>
    </source>
</reference>
<dbReference type="EMBL" id="CP001099">
    <property type="protein sequence ID" value="ACF11742.1"/>
    <property type="molecule type" value="Genomic_DNA"/>
</dbReference>
<dbReference type="RefSeq" id="WP_012502575.1">
    <property type="nucleotide sequence ID" value="NC_011027.1"/>
</dbReference>
<dbReference type="SMR" id="B3QP89"/>
<dbReference type="STRING" id="517417.Cpar_1339"/>
<dbReference type="KEGG" id="cpc:Cpar_1339"/>
<dbReference type="eggNOG" id="COG0428">
    <property type="taxonomic scope" value="Bacteria"/>
</dbReference>
<dbReference type="HOGENOM" id="CLU_015114_1_3_10"/>
<dbReference type="OrthoDB" id="9787346at2"/>
<dbReference type="Proteomes" id="UP000008811">
    <property type="component" value="Chromosome"/>
</dbReference>
<dbReference type="GO" id="GO:0005886">
    <property type="term" value="C:plasma membrane"/>
    <property type="evidence" value="ECO:0007669"/>
    <property type="project" value="UniProtKB-SubCell"/>
</dbReference>
<dbReference type="GO" id="GO:0046872">
    <property type="term" value="F:metal ion binding"/>
    <property type="evidence" value="ECO:0007669"/>
    <property type="project" value="UniProtKB-KW"/>
</dbReference>
<dbReference type="GO" id="GO:0005385">
    <property type="term" value="F:zinc ion transmembrane transporter activity"/>
    <property type="evidence" value="ECO:0007669"/>
    <property type="project" value="UniProtKB-UniRule"/>
</dbReference>
<dbReference type="HAMAP" id="MF_00548">
    <property type="entry name" value="ZupT"/>
    <property type="match status" value="1"/>
</dbReference>
<dbReference type="InterPro" id="IPR003689">
    <property type="entry name" value="ZIP"/>
</dbReference>
<dbReference type="InterPro" id="IPR023498">
    <property type="entry name" value="Zn_transptr_ZupT"/>
</dbReference>
<dbReference type="NCBIfam" id="NF003243">
    <property type="entry name" value="PRK04201.1"/>
    <property type="match status" value="1"/>
</dbReference>
<dbReference type="PANTHER" id="PTHR11040:SF205">
    <property type="entry name" value="ZINC TRANSPORTER ZUPT"/>
    <property type="match status" value="1"/>
</dbReference>
<dbReference type="PANTHER" id="PTHR11040">
    <property type="entry name" value="ZINC/IRON TRANSPORTER"/>
    <property type="match status" value="1"/>
</dbReference>
<dbReference type="Pfam" id="PF02535">
    <property type="entry name" value="Zip"/>
    <property type="match status" value="1"/>
</dbReference>
<protein>
    <recommendedName>
        <fullName evidence="1">Zinc transporter ZupT</fullName>
    </recommendedName>
</protein>
<feature type="chain" id="PRO_1000128946" description="Zinc transporter ZupT">
    <location>
        <begin position="1"/>
        <end position="268"/>
    </location>
</feature>
<feature type="transmembrane region" description="Helical" evidence="1">
    <location>
        <begin position="5"/>
        <end position="25"/>
    </location>
</feature>
<feature type="transmembrane region" description="Helical" evidence="1">
    <location>
        <begin position="38"/>
        <end position="58"/>
    </location>
</feature>
<feature type="transmembrane region" description="Helical" evidence="1">
    <location>
        <begin position="72"/>
        <end position="92"/>
    </location>
</feature>
<feature type="transmembrane region" description="Helical" evidence="1">
    <location>
        <begin position="124"/>
        <end position="144"/>
    </location>
</feature>
<feature type="transmembrane region" description="Helical" evidence="1">
    <location>
        <begin position="152"/>
        <end position="172"/>
    </location>
</feature>
<feature type="transmembrane region" description="Helical" evidence="1">
    <location>
        <begin position="187"/>
        <end position="207"/>
    </location>
</feature>
<feature type="transmembrane region" description="Helical" evidence="1">
    <location>
        <begin position="211"/>
        <end position="231"/>
    </location>
</feature>
<feature type="transmembrane region" description="Helical" evidence="1">
    <location>
        <begin position="248"/>
        <end position="268"/>
    </location>
</feature>
<feature type="binding site" description="M2 metal binding site" evidence="1">
    <location>
        <position position="136"/>
    </location>
    <ligand>
        <name>Fe(2+)</name>
        <dbReference type="ChEBI" id="CHEBI:29033"/>
    </ligand>
</feature>
<feature type="binding site" description="M2 metal binding site" evidence="1">
    <location>
        <position position="139"/>
    </location>
    <ligand>
        <name>Fe(2+)</name>
        <dbReference type="ChEBI" id="CHEBI:29033"/>
    </ligand>
</feature>
<feature type="binding site" description="M1 metal binding site" evidence="1">
    <location>
        <position position="139"/>
    </location>
    <ligand>
        <name>Zn(2+)</name>
        <dbReference type="ChEBI" id="CHEBI:29105"/>
    </ligand>
</feature>
<feature type="binding site" description="M1 metal binding site" evidence="1">
    <location>
        <position position="164"/>
    </location>
    <ligand>
        <name>Zn(2+)</name>
        <dbReference type="ChEBI" id="CHEBI:29105"/>
    </ligand>
</feature>
<feature type="binding site" description="M2 metal binding site" evidence="1">
    <location>
        <position position="165"/>
    </location>
    <ligand>
        <name>Fe(2+)</name>
        <dbReference type="ChEBI" id="CHEBI:29033"/>
    </ligand>
</feature>
<feature type="binding site" description="M2 metal binding site" evidence="1">
    <location>
        <position position="168"/>
    </location>
    <ligand>
        <name>Fe(2+)</name>
        <dbReference type="ChEBI" id="CHEBI:29033"/>
    </ligand>
</feature>
<feature type="binding site" description="M1 metal binding site" evidence="1">
    <location>
        <position position="168"/>
    </location>
    <ligand>
        <name>Zn(2+)</name>
        <dbReference type="ChEBI" id="CHEBI:29105"/>
    </ligand>
</feature>
<feature type="binding site" description="M2 metal binding site" evidence="1">
    <location>
        <position position="197"/>
    </location>
    <ligand>
        <name>Fe(2+)</name>
        <dbReference type="ChEBI" id="CHEBI:29033"/>
    </ligand>
</feature>
<sequence>MSDSILFAFSLTLLAGLATGIGSIIGFLSKDVNPKMLTVSLGFSAGVMLYVSMIEIFVKAKDALSVELGDKAGYIWTVIAFFVGIFVIALIDKLVPAYENPHEMNTEKIIEESSAKDKAKLLRMGLFSALAIGIHNFPEGLATFMSGLSNPTLGISIAVAIAIHNIPEGLAVSAPIYFATKSRKKAFVLSFLSGLAEPIGAIAGFFLLRTLFTELTFGLVFASVAGIMVYISLDELLPTAEEYGEHHLAIGGLVGGMLVMAVSLLLFL</sequence>
<organism>
    <name type="scientific">Chlorobaculum parvum (strain DSM 263 / NCIMB 8327)</name>
    <name type="common">Chlorobium vibrioforme subsp. thiosulfatophilum</name>
    <dbReference type="NCBI Taxonomy" id="517417"/>
    <lineage>
        <taxon>Bacteria</taxon>
        <taxon>Pseudomonadati</taxon>
        <taxon>Chlorobiota</taxon>
        <taxon>Chlorobiia</taxon>
        <taxon>Chlorobiales</taxon>
        <taxon>Chlorobiaceae</taxon>
        <taxon>Chlorobaculum</taxon>
    </lineage>
</organism>
<gene>
    <name evidence="1" type="primary">zupT</name>
    <name type="ordered locus">Cpar_1339</name>
</gene>
<evidence type="ECO:0000255" key="1">
    <source>
        <dbReference type="HAMAP-Rule" id="MF_00548"/>
    </source>
</evidence>
<comment type="function">
    <text evidence="1">Mediates zinc uptake. May also transport other divalent cations.</text>
</comment>
<comment type="catalytic activity">
    <reaction evidence="1">
        <text>Zn(2+)(in) = Zn(2+)(out)</text>
        <dbReference type="Rhea" id="RHEA:29351"/>
        <dbReference type="ChEBI" id="CHEBI:29105"/>
    </reaction>
</comment>
<comment type="subcellular location">
    <subcellularLocation>
        <location evidence="1">Cell inner membrane</location>
        <topology evidence="1">Multi-pass membrane protein</topology>
    </subcellularLocation>
</comment>
<comment type="similarity">
    <text evidence="1">Belongs to the ZIP transporter (TC 2.A.5) family. ZupT subfamily.</text>
</comment>
<proteinExistence type="inferred from homology"/>
<accession>B3QP89</accession>